<reference key="1">
    <citation type="journal article" date="2007" name="Genome Biol.">
        <title>Large-scale identification of human genes implicated in epidermal barrier function.</title>
        <authorList>
            <person name="Toulza E."/>
            <person name="Mattiuzzo N.R."/>
            <person name="Galliano M.F."/>
            <person name="Jonca N."/>
            <person name="Dossat C."/>
            <person name="Jacob D."/>
            <person name="de Daruvar A."/>
            <person name="Wincker P."/>
            <person name="Serre G."/>
            <person name="Guerrin M."/>
        </authorList>
    </citation>
    <scope>NUCLEOTIDE SEQUENCE [MRNA]</scope>
    <scope>FUNCTION</scope>
    <scope>TISSUE SPECIFICITY</scope>
    <source>
        <tissue>Keratinocyte</tissue>
    </source>
</reference>
<reference key="2">
    <citation type="journal article" date="2004" name="Nature">
        <title>The DNA sequence and comparative analysis of human chromosome 10.</title>
        <authorList>
            <person name="Deloukas P."/>
            <person name="Earthrowl M.E."/>
            <person name="Grafham D.V."/>
            <person name="Rubenfield M."/>
            <person name="French L."/>
            <person name="Steward C.A."/>
            <person name="Sims S.K."/>
            <person name="Jones M.C."/>
            <person name="Searle S."/>
            <person name="Scott C."/>
            <person name="Howe K."/>
            <person name="Hunt S.E."/>
            <person name="Andrews T.D."/>
            <person name="Gilbert J.G.R."/>
            <person name="Swarbreck D."/>
            <person name="Ashurst J.L."/>
            <person name="Taylor A."/>
            <person name="Battles J."/>
            <person name="Bird C.P."/>
            <person name="Ainscough R."/>
            <person name="Almeida J.P."/>
            <person name="Ashwell R.I.S."/>
            <person name="Ambrose K.D."/>
            <person name="Babbage A.K."/>
            <person name="Bagguley C.L."/>
            <person name="Bailey J."/>
            <person name="Banerjee R."/>
            <person name="Bates K."/>
            <person name="Beasley H."/>
            <person name="Bray-Allen S."/>
            <person name="Brown A.J."/>
            <person name="Brown J.Y."/>
            <person name="Burford D.C."/>
            <person name="Burrill W."/>
            <person name="Burton J."/>
            <person name="Cahill P."/>
            <person name="Camire D."/>
            <person name="Carter N.P."/>
            <person name="Chapman J.C."/>
            <person name="Clark S.Y."/>
            <person name="Clarke G."/>
            <person name="Clee C.M."/>
            <person name="Clegg S."/>
            <person name="Corby N."/>
            <person name="Coulson A."/>
            <person name="Dhami P."/>
            <person name="Dutta I."/>
            <person name="Dunn M."/>
            <person name="Faulkner L."/>
            <person name="Frankish A."/>
            <person name="Frankland J.A."/>
            <person name="Garner P."/>
            <person name="Garnett J."/>
            <person name="Gribble S."/>
            <person name="Griffiths C."/>
            <person name="Grocock R."/>
            <person name="Gustafson E."/>
            <person name="Hammond S."/>
            <person name="Harley J.L."/>
            <person name="Hart E."/>
            <person name="Heath P.D."/>
            <person name="Ho T.P."/>
            <person name="Hopkins B."/>
            <person name="Horne J."/>
            <person name="Howden P.J."/>
            <person name="Huckle E."/>
            <person name="Hynds C."/>
            <person name="Johnson C."/>
            <person name="Johnson D."/>
            <person name="Kana A."/>
            <person name="Kay M."/>
            <person name="Kimberley A.M."/>
            <person name="Kershaw J.K."/>
            <person name="Kokkinaki M."/>
            <person name="Laird G.K."/>
            <person name="Lawlor S."/>
            <person name="Lee H.M."/>
            <person name="Leongamornlert D.A."/>
            <person name="Laird G."/>
            <person name="Lloyd C."/>
            <person name="Lloyd D.M."/>
            <person name="Loveland J."/>
            <person name="Lovell J."/>
            <person name="McLaren S."/>
            <person name="McLay K.E."/>
            <person name="McMurray A."/>
            <person name="Mashreghi-Mohammadi M."/>
            <person name="Matthews L."/>
            <person name="Milne S."/>
            <person name="Nickerson T."/>
            <person name="Nguyen M."/>
            <person name="Overton-Larty E."/>
            <person name="Palmer S.A."/>
            <person name="Pearce A.V."/>
            <person name="Peck A.I."/>
            <person name="Pelan S."/>
            <person name="Phillimore B."/>
            <person name="Porter K."/>
            <person name="Rice C.M."/>
            <person name="Rogosin A."/>
            <person name="Ross M.T."/>
            <person name="Sarafidou T."/>
            <person name="Sehra H.K."/>
            <person name="Shownkeen R."/>
            <person name="Skuce C.D."/>
            <person name="Smith M."/>
            <person name="Standring L."/>
            <person name="Sycamore N."/>
            <person name="Tester J."/>
            <person name="Thorpe A."/>
            <person name="Torcasso W."/>
            <person name="Tracey A."/>
            <person name="Tromans A."/>
            <person name="Tsolas J."/>
            <person name="Wall M."/>
            <person name="Walsh J."/>
            <person name="Wang H."/>
            <person name="Weinstock K."/>
            <person name="West A.P."/>
            <person name="Willey D.L."/>
            <person name="Whitehead S.L."/>
            <person name="Wilming L."/>
            <person name="Wray P.W."/>
            <person name="Young L."/>
            <person name="Chen Y."/>
            <person name="Lovering R.C."/>
            <person name="Moschonas N.K."/>
            <person name="Siebert R."/>
            <person name="Fechtel K."/>
            <person name="Bentley D."/>
            <person name="Durbin R.M."/>
            <person name="Hubbard T."/>
            <person name="Doucette-Stamm L."/>
            <person name="Beck S."/>
            <person name="Smith D.R."/>
            <person name="Rogers J."/>
        </authorList>
    </citation>
    <scope>NUCLEOTIDE SEQUENCE [LARGE SCALE GENOMIC DNA]</scope>
</reference>
<keyword id="KW-1015">Disulfide bond</keyword>
<keyword id="KW-0325">Glycoprotein</keyword>
<keyword id="KW-0378">Hydrolase</keyword>
<keyword id="KW-0442">Lipid degradation</keyword>
<keyword id="KW-0443">Lipid metabolism</keyword>
<keyword id="KW-1267">Proteomics identification</keyword>
<keyword id="KW-1185">Reference proteome</keyword>
<keyword id="KW-0964">Secreted</keyword>
<keyword id="KW-0732">Signal</keyword>
<gene>
    <name type="primary">LIPK</name>
    <name type="synonym">LIPL2</name>
</gene>
<protein>
    <recommendedName>
        <fullName>Lipase member K</fullName>
        <ecNumber>3.1.1.-</ecNumber>
    </recommendedName>
    <alternativeName>
        <fullName>Lipase-like abhydrolase domain-containing protein 2</fullName>
    </alternativeName>
</protein>
<evidence type="ECO:0000250" key="1"/>
<evidence type="ECO:0000255" key="2"/>
<evidence type="ECO:0000255" key="3">
    <source>
        <dbReference type="PROSITE-ProRule" id="PRU10037"/>
    </source>
</evidence>
<evidence type="ECO:0000269" key="4">
    <source>
    </source>
</evidence>
<evidence type="ECO:0000305" key="5"/>
<sequence>MWQLLAAACWMLLLGSMYGYDKKGNNANPEANMNISQIISYWGYPYEEYDVTTKDGYILGIYRIPHGRGCPGRTAPKPAVYLQHGLIASASNWICNLPNNSLAFLLADSGYDVWLGNSRGNTWSRKHLKLSPKSPEYWAFSLDEMAKYDLPATINFIIEKTGQKRLYYVGHSQGTTIAFIAFSTNPELAKKIKIFFALAPVVTVKYTQSPMKKLTTLSRRVVKVLFGDKMFHPHTLFDQFIATKVCNRKLFRRICSNFLFTLSGFDPQNLNMSRLDVYLSHNPAGTSVQNMLHWAQAVNSGQLQAFDWGNSDQNMMHFHQLTPPLYNITKMEVPTAIWNGGQDIVADPKDVENLLPQIANLIYYKLIPHYNHVDFYLGEDAPQEIYQDLIILMEEYLQN</sequence>
<organism>
    <name type="scientific">Homo sapiens</name>
    <name type="common">Human</name>
    <dbReference type="NCBI Taxonomy" id="9606"/>
    <lineage>
        <taxon>Eukaryota</taxon>
        <taxon>Metazoa</taxon>
        <taxon>Chordata</taxon>
        <taxon>Craniata</taxon>
        <taxon>Vertebrata</taxon>
        <taxon>Euteleostomi</taxon>
        <taxon>Mammalia</taxon>
        <taxon>Eutheria</taxon>
        <taxon>Euarchontoglires</taxon>
        <taxon>Primates</taxon>
        <taxon>Haplorrhini</taxon>
        <taxon>Catarrhini</taxon>
        <taxon>Hominidae</taxon>
        <taxon>Homo</taxon>
    </lineage>
</organism>
<name>LIPK_HUMAN</name>
<dbReference type="EC" id="3.1.1.-"/>
<dbReference type="EMBL" id="EF426482">
    <property type="protein sequence ID" value="ABR08387.1"/>
    <property type="molecule type" value="mRNA"/>
</dbReference>
<dbReference type="EMBL" id="AL358532">
    <property type="status" value="NOT_ANNOTATED_CDS"/>
    <property type="molecule type" value="Genomic_DNA"/>
</dbReference>
<dbReference type="CCDS" id="CCDS44455.1"/>
<dbReference type="RefSeq" id="NP_001073987.1">
    <property type="nucleotide sequence ID" value="NM_001080518.2"/>
</dbReference>
<dbReference type="RefSeq" id="XP_011538379.1">
    <property type="nucleotide sequence ID" value="XM_011540077.1"/>
</dbReference>
<dbReference type="SMR" id="Q5VXJ0"/>
<dbReference type="BioGRID" id="568761">
    <property type="interactions" value="12"/>
</dbReference>
<dbReference type="FunCoup" id="Q5VXJ0">
    <property type="interactions" value="8"/>
</dbReference>
<dbReference type="IntAct" id="Q5VXJ0">
    <property type="interactions" value="7"/>
</dbReference>
<dbReference type="STRING" id="9606.ENSP00000383900"/>
<dbReference type="ESTHER" id="human-LIPK">
    <property type="family name" value="Acidic_Lipase"/>
</dbReference>
<dbReference type="GlyConnect" id="1459">
    <property type="glycosylation" value="3 N-Linked glycans (1 site)"/>
</dbReference>
<dbReference type="GlyCosmos" id="Q5VXJ0">
    <property type="glycosylation" value="2 sites, 3 glycans"/>
</dbReference>
<dbReference type="GlyGen" id="Q5VXJ0">
    <property type="glycosylation" value="2 sites, 3 N-linked glycans (1 site)"/>
</dbReference>
<dbReference type="iPTMnet" id="Q5VXJ0"/>
<dbReference type="PhosphoSitePlus" id="Q5VXJ0"/>
<dbReference type="BioMuta" id="LIPK"/>
<dbReference type="DMDM" id="147647699"/>
<dbReference type="jPOST" id="Q5VXJ0"/>
<dbReference type="MassIVE" id="Q5VXJ0"/>
<dbReference type="PaxDb" id="9606-ENSP00000383900"/>
<dbReference type="PeptideAtlas" id="Q5VXJ0"/>
<dbReference type="ProteomicsDB" id="65597"/>
<dbReference type="Antibodypedia" id="56554">
    <property type="antibodies" value="99 antibodies from 14 providers"/>
</dbReference>
<dbReference type="DNASU" id="643414"/>
<dbReference type="Ensembl" id="ENST00000404190.3">
    <property type="protein sequence ID" value="ENSP00000383900.1"/>
    <property type="gene ID" value="ENSG00000204021.5"/>
</dbReference>
<dbReference type="GeneID" id="643414"/>
<dbReference type="KEGG" id="hsa:643414"/>
<dbReference type="MANE-Select" id="ENST00000404190.3">
    <property type="protein sequence ID" value="ENSP00000383900.1"/>
    <property type="RefSeq nucleotide sequence ID" value="NM_001080518.2"/>
    <property type="RefSeq protein sequence ID" value="NP_001073987.1"/>
</dbReference>
<dbReference type="UCSC" id="uc010qmv.3">
    <property type="organism name" value="human"/>
</dbReference>
<dbReference type="AGR" id="HGNC:23444"/>
<dbReference type="CTD" id="643414"/>
<dbReference type="DisGeNET" id="643414"/>
<dbReference type="GeneCards" id="LIPK"/>
<dbReference type="HGNC" id="HGNC:23444">
    <property type="gene designation" value="LIPK"/>
</dbReference>
<dbReference type="HPA" id="ENSG00000204021">
    <property type="expression patterns" value="Tissue enriched (skin)"/>
</dbReference>
<dbReference type="MIM" id="613922">
    <property type="type" value="gene"/>
</dbReference>
<dbReference type="neXtProt" id="NX_Q5VXJ0"/>
<dbReference type="OpenTargets" id="ENSG00000204021"/>
<dbReference type="PharmGKB" id="PA162394100"/>
<dbReference type="VEuPathDB" id="HostDB:ENSG00000204021"/>
<dbReference type="eggNOG" id="KOG2624">
    <property type="taxonomic scope" value="Eukaryota"/>
</dbReference>
<dbReference type="GeneTree" id="ENSGT00940000160031"/>
<dbReference type="HOGENOM" id="CLU_010974_0_0_1"/>
<dbReference type="InParanoid" id="Q5VXJ0"/>
<dbReference type="OMA" id="GYPYEKY"/>
<dbReference type="OrthoDB" id="9974421at2759"/>
<dbReference type="PAN-GO" id="Q5VXJ0">
    <property type="GO annotations" value="1 GO annotation based on evolutionary models"/>
</dbReference>
<dbReference type="PhylomeDB" id="Q5VXJ0"/>
<dbReference type="TreeFam" id="TF315485"/>
<dbReference type="PathwayCommons" id="Q5VXJ0"/>
<dbReference type="Reactome" id="R-HSA-6809371">
    <property type="pathway name" value="Formation of the cornified envelope"/>
</dbReference>
<dbReference type="BioGRID-ORCS" id="643414">
    <property type="hits" value="9 hits in 1143 CRISPR screens"/>
</dbReference>
<dbReference type="GenomeRNAi" id="643414"/>
<dbReference type="Pharos" id="Q5VXJ0">
    <property type="development level" value="Tbio"/>
</dbReference>
<dbReference type="PRO" id="PR:Q5VXJ0"/>
<dbReference type="Proteomes" id="UP000005640">
    <property type="component" value="Chromosome 10"/>
</dbReference>
<dbReference type="RNAct" id="Q5VXJ0">
    <property type="molecule type" value="protein"/>
</dbReference>
<dbReference type="Bgee" id="ENSG00000204021">
    <property type="expression patterns" value="Expressed in skin of abdomen and 23 other cell types or tissues"/>
</dbReference>
<dbReference type="GO" id="GO:0005576">
    <property type="term" value="C:extracellular region"/>
    <property type="evidence" value="ECO:0000304"/>
    <property type="project" value="Reactome"/>
</dbReference>
<dbReference type="GO" id="GO:0043231">
    <property type="term" value="C:intracellular membrane-bounded organelle"/>
    <property type="evidence" value="ECO:0000318"/>
    <property type="project" value="GO_Central"/>
</dbReference>
<dbReference type="GO" id="GO:0004465">
    <property type="term" value="F:lipoprotein lipase activity"/>
    <property type="evidence" value="ECO:0000304"/>
    <property type="project" value="Reactome"/>
</dbReference>
<dbReference type="GO" id="GO:0070268">
    <property type="term" value="P:cornification"/>
    <property type="evidence" value="ECO:0000304"/>
    <property type="project" value="Reactome"/>
</dbReference>
<dbReference type="GO" id="GO:0016042">
    <property type="term" value="P:lipid catabolic process"/>
    <property type="evidence" value="ECO:0007669"/>
    <property type="project" value="UniProtKB-KW"/>
</dbReference>
<dbReference type="FunFam" id="3.40.50.1820:FF:000012">
    <property type="entry name" value="Lipase"/>
    <property type="match status" value="1"/>
</dbReference>
<dbReference type="Gene3D" id="3.40.50.1820">
    <property type="entry name" value="alpha/beta hydrolase"/>
    <property type="match status" value="1"/>
</dbReference>
<dbReference type="InterPro" id="IPR000073">
    <property type="entry name" value="AB_hydrolase_1"/>
</dbReference>
<dbReference type="InterPro" id="IPR029058">
    <property type="entry name" value="AB_hydrolase_fold"/>
</dbReference>
<dbReference type="InterPro" id="IPR025483">
    <property type="entry name" value="Lipase_euk"/>
</dbReference>
<dbReference type="PANTHER" id="PTHR11005">
    <property type="entry name" value="LYSOSOMAL ACID LIPASE-RELATED"/>
    <property type="match status" value="1"/>
</dbReference>
<dbReference type="Pfam" id="PF00561">
    <property type="entry name" value="Abhydrolase_1"/>
    <property type="match status" value="1"/>
</dbReference>
<dbReference type="PIRSF" id="PIRSF000862">
    <property type="entry name" value="Steryl_ester_lip"/>
    <property type="match status" value="1"/>
</dbReference>
<dbReference type="SUPFAM" id="SSF53474">
    <property type="entry name" value="alpha/beta-Hydrolases"/>
    <property type="match status" value="1"/>
</dbReference>
<dbReference type="PROSITE" id="PS00120">
    <property type="entry name" value="LIPASE_SER"/>
    <property type="match status" value="1"/>
</dbReference>
<comment type="function">
    <text evidence="4">Plays a highly specific role in the last step of keratinocyte differentiation. May have an essential function in lipid metabolism of the most differentiated epidermal layers.</text>
</comment>
<comment type="subcellular location">
    <subcellularLocation>
        <location evidence="5">Secreted</location>
    </subcellularLocation>
</comment>
<comment type="tissue specificity">
    <text evidence="4">Exclusively expressed in the epidermis within the granular keratinocytes.</text>
</comment>
<comment type="similarity">
    <text evidence="5">Belongs to the AB hydrolase superfamily. Lipase family.</text>
</comment>
<feature type="signal peptide" evidence="2">
    <location>
        <begin position="1"/>
        <end position="19"/>
    </location>
</feature>
<feature type="chain" id="PRO_0000286699" description="Lipase member K">
    <location>
        <begin position="20"/>
        <end position="399"/>
    </location>
</feature>
<feature type="domain" description="AB hydrolase-1" evidence="2">
    <location>
        <begin position="78"/>
        <end position="378"/>
    </location>
</feature>
<feature type="active site" description="Nucleophile" evidence="1">
    <location>
        <position position="172"/>
    </location>
</feature>
<feature type="active site" description="Charge relay system" evidence="3">
    <location>
        <position position="343"/>
    </location>
</feature>
<feature type="active site" description="Charge relay system" evidence="3">
    <location>
        <position position="372"/>
    </location>
</feature>
<feature type="glycosylation site" description="N-linked (GlcNAc...) asparagine" evidence="2">
    <location>
        <position position="271"/>
    </location>
</feature>
<feature type="glycosylation site" description="N-linked (GlcNAc...) asparagine" evidence="2">
    <location>
        <position position="327"/>
    </location>
</feature>
<feature type="disulfide bond" evidence="1">
    <location>
        <begin position="246"/>
        <end position="255"/>
    </location>
</feature>
<feature type="sequence variant" id="VAR_032160" description="In dbSNP:rs1214464.">
    <original>M</original>
    <variation>I</variation>
    <location>
        <position position="331"/>
    </location>
</feature>
<feature type="sequence variant" id="VAR_032161" description="In dbSNP:rs17112457.">
    <original>I</original>
    <variation>T</variation>
    <location>
        <position position="391"/>
    </location>
</feature>
<accession>Q5VXJ0</accession>
<accession>A7KIH8</accession>
<proteinExistence type="evidence at protein level"/>